<comment type="similarity">
    <text evidence="1">Belongs to the bacterial ribosomal protein bL35 family.</text>
</comment>
<dbReference type="EMBL" id="BX571965">
    <property type="protein sequence ID" value="CAH35942.1"/>
    <property type="molecule type" value="Genomic_DNA"/>
</dbReference>
<dbReference type="RefSeq" id="WP_004191477.1">
    <property type="nucleotide sequence ID" value="NZ_CP009538.1"/>
</dbReference>
<dbReference type="RefSeq" id="YP_108542.1">
    <property type="nucleotide sequence ID" value="NC_006350.1"/>
</dbReference>
<dbReference type="SMR" id="Q63TM4"/>
<dbReference type="STRING" id="272560.BPSL1943"/>
<dbReference type="GeneID" id="98102115"/>
<dbReference type="KEGG" id="bps:BPSL1943"/>
<dbReference type="PATRIC" id="fig|272560.51.peg.4087"/>
<dbReference type="eggNOG" id="COG0291">
    <property type="taxonomic scope" value="Bacteria"/>
</dbReference>
<dbReference type="PRO" id="PR:Q63TM4"/>
<dbReference type="Proteomes" id="UP000000605">
    <property type="component" value="Chromosome 1"/>
</dbReference>
<dbReference type="GO" id="GO:0022625">
    <property type="term" value="C:cytosolic large ribosomal subunit"/>
    <property type="evidence" value="ECO:0007669"/>
    <property type="project" value="TreeGrafter"/>
</dbReference>
<dbReference type="GO" id="GO:0003735">
    <property type="term" value="F:structural constituent of ribosome"/>
    <property type="evidence" value="ECO:0007669"/>
    <property type="project" value="InterPro"/>
</dbReference>
<dbReference type="GO" id="GO:0006412">
    <property type="term" value="P:translation"/>
    <property type="evidence" value="ECO:0007669"/>
    <property type="project" value="UniProtKB-UniRule"/>
</dbReference>
<dbReference type="FunFam" id="4.10.410.60:FF:000001">
    <property type="entry name" value="50S ribosomal protein L35"/>
    <property type="match status" value="1"/>
</dbReference>
<dbReference type="Gene3D" id="4.10.410.60">
    <property type="match status" value="1"/>
</dbReference>
<dbReference type="HAMAP" id="MF_00514">
    <property type="entry name" value="Ribosomal_bL35"/>
    <property type="match status" value="1"/>
</dbReference>
<dbReference type="InterPro" id="IPR001706">
    <property type="entry name" value="Ribosomal_bL35"/>
</dbReference>
<dbReference type="InterPro" id="IPR021137">
    <property type="entry name" value="Ribosomal_bL35-like"/>
</dbReference>
<dbReference type="InterPro" id="IPR018265">
    <property type="entry name" value="Ribosomal_bL35_CS"/>
</dbReference>
<dbReference type="InterPro" id="IPR037229">
    <property type="entry name" value="Ribosomal_bL35_sf"/>
</dbReference>
<dbReference type="NCBIfam" id="TIGR00001">
    <property type="entry name" value="rpmI_bact"/>
    <property type="match status" value="1"/>
</dbReference>
<dbReference type="PANTHER" id="PTHR33343">
    <property type="entry name" value="54S RIBOSOMAL PROTEIN BL35M"/>
    <property type="match status" value="1"/>
</dbReference>
<dbReference type="PANTHER" id="PTHR33343:SF1">
    <property type="entry name" value="LARGE RIBOSOMAL SUBUNIT PROTEIN BL35M"/>
    <property type="match status" value="1"/>
</dbReference>
<dbReference type="Pfam" id="PF01632">
    <property type="entry name" value="Ribosomal_L35p"/>
    <property type="match status" value="1"/>
</dbReference>
<dbReference type="PRINTS" id="PR00064">
    <property type="entry name" value="RIBOSOMALL35"/>
</dbReference>
<dbReference type="SUPFAM" id="SSF143034">
    <property type="entry name" value="L35p-like"/>
    <property type="match status" value="1"/>
</dbReference>
<dbReference type="PROSITE" id="PS00936">
    <property type="entry name" value="RIBOSOMAL_L35"/>
    <property type="match status" value="1"/>
</dbReference>
<sequence length="65" mass="7301">MPKMKTKKSAAKRFVVRPGGTVKRGQAFKRHILTKKTTKNKRHLRGATAVHDSDLNSVRAMLPFA</sequence>
<name>RL35_BURPS</name>
<keyword id="KW-1185">Reference proteome</keyword>
<keyword id="KW-0687">Ribonucleoprotein</keyword>
<keyword id="KW-0689">Ribosomal protein</keyword>
<organism>
    <name type="scientific">Burkholderia pseudomallei (strain K96243)</name>
    <dbReference type="NCBI Taxonomy" id="272560"/>
    <lineage>
        <taxon>Bacteria</taxon>
        <taxon>Pseudomonadati</taxon>
        <taxon>Pseudomonadota</taxon>
        <taxon>Betaproteobacteria</taxon>
        <taxon>Burkholderiales</taxon>
        <taxon>Burkholderiaceae</taxon>
        <taxon>Burkholderia</taxon>
        <taxon>pseudomallei group</taxon>
    </lineage>
</organism>
<gene>
    <name evidence="1" type="primary">rpmI</name>
    <name type="ordered locus">BPSL1943</name>
</gene>
<proteinExistence type="inferred from homology"/>
<evidence type="ECO:0000255" key="1">
    <source>
        <dbReference type="HAMAP-Rule" id="MF_00514"/>
    </source>
</evidence>
<evidence type="ECO:0000305" key="2"/>
<protein>
    <recommendedName>
        <fullName evidence="1">Large ribosomal subunit protein bL35</fullName>
    </recommendedName>
    <alternativeName>
        <fullName evidence="2">50S ribosomal protein L35</fullName>
    </alternativeName>
</protein>
<reference key="1">
    <citation type="journal article" date="2004" name="Proc. Natl. Acad. Sci. U.S.A.">
        <title>Genomic plasticity of the causative agent of melioidosis, Burkholderia pseudomallei.</title>
        <authorList>
            <person name="Holden M.T.G."/>
            <person name="Titball R.W."/>
            <person name="Peacock S.J."/>
            <person name="Cerdeno-Tarraga A.-M."/>
            <person name="Atkins T."/>
            <person name="Crossman L.C."/>
            <person name="Pitt T."/>
            <person name="Churcher C."/>
            <person name="Mungall K.L."/>
            <person name="Bentley S.D."/>
            <person name="Sebaihia M."/>
            <person name="Thomson N.R."/>
            <person name="Bason N."/>
            <person name="Beacham I.R."/>
            <person name="Brooks K."/>
            <person name="Brown K.A."/>
            <person name="Brown N.F."/>
            <person name="Challis G.L."/>
            <person name="Cherevach I."/>
            <person name="Chillingworth T."/>
            <person name="Cronin A."/>
            <person name="Crossett B."/>
            <person name="Davis P."/>
            <person name="DeShazer D."/>
            <person name="Feltwell T."/>
            <person name="Fraser A."/>
            <person name="Hance Z."/>
            <person name="Hauser H."/>
            <person name="Holroyd S."/>
            <person name="Jagels K."/>
            <person name="Keith K.E."/>
            <person name="Maddison M."/>
            <person name="Moule S."/>
            <person name="Price C."/>
            <person name="Quail M.A."/>
            <person name="Rabbinowitsch E."/>
            <person name="Rutherford K."/>
            <person name="Sanders M."/>
            <person name="Simmonds M."/>
            <person name="Songsivilai S."/>
            <person name="Stevens K."/>
            <person name="Tumapa S."/>
            <person name="Vesaratchavest M."/>
            <person name="Whitehead S."/>
            <person name="Yeats C."/>
            <person name="Barrell B.G."/>
            <person name="Oyston P.C.F."/>
            <person name="Parkhill J."/>
        </authorList>
    </citation>
    <scope>NUCLEOTIDE SEQUENCE [LARGE SCALE GENOMIC DNA]</scope>
    <source>
        <strain>K96243</strain>
    </source>
</reference>
<feature type="chain" id="PRO_0000258648" description="Large ribosomal subunit protein bL35">
    <location>
        <begin position="1"/>
        <end position="65"/>
    </location>
</feature>
<accession>Q63TM4</accession>